<organism>
    <name type="scientific">Pasteurella multocida (strain Pm70)</name>
    <dbReference type="NCBI Taxonomy" id="272843"/>
    <lineage>
        <taxon>Bacteria</taxon>
        <taxon>Pseudomonadati</taxon>
        <taxon>Pseudomonadota</taxon>
        <taxon>Gammaproteobacteria</taxon>
        <taxon>Pasteurellales</taxon>
        <taxon>Pasteurellaceae</taxon>
        <taxon>Pasteurella</taxon>
    </lineage>
</organism>
<dbReference type="EC" id="6.5.1.2" evidence="1"/>
<dbReference type="EMBL" id="AE004439">
    <property type="protein sequence ID" value="AAK03800.1"/>
    <property type="molecule type" value="Genomic_DNA"/>
</dbReference>
<dbReference type="RefSeq" id="WP_010907299.1">
    <property type="nucleotide sequence ID" value="NC_002663.1"/>
</dbReference>
<dbReference type="SMR" id="Q9CKA9"/>
<dbReference type="STRING" id="272843.PM1716"/>
<dbReference type="EnsemblBacteria" id="AAK03800">
    <property type="protein sequence ID" value="AAK03800"/>
    <property type="gene ID" value="PM1716"/>
</dbReference>
<dbReference type="KEGG" id="pmu:PM1716"/>
<dbReference type="PATRIC" id="fig|272843.6.peg.1737"/>
<dbReference type="HOGENOM" id="CLU_007764_2_1_6"/>
<dbReference type="OrthoDB" id="9759736at2"/>
<dbReference type="Proteomes" id="UP000000809">
    <property type="component" value="Chromosome"/>
</dbReference>
<dbReference type="GO" id="GO:0005829">
    <property type="term" value="C:cytosol"/>
    <property type="evidence" value="ECO:0007669"/>
    <property type="project" value="TreeGrafter"/>
</dbReference>
<dbReference type="GO" id="GO:0003677">
    <property type="term" value="F:DNA binding"/>
    <property type="evidence" value="ECO:0007669"/>
    <property type="project" value="InterPro"/>
</dbReference>
<dbReference type="GO" id="GO:0003911">
    <property type="term" value="F:DNA ligase (NAD+) activity"/>
    <property type="evidence" value="ECO:0007669"/>
    <property type="project" value="UniProtKB-UniRule"/>
</dbReference>
<dbReference type="GO" id="GO:0046872">
    <property type="term" value="F:metal ion binding"/>
    <property type="evidence" value="ECO:0007669"/>
    <property type="project" value="UniProtKB-KW"/>
</dbReference>
<dbReference type="GO" id="GO:0006281">
    <property type="term" value="P:DNA repair"/>
    <property type="evidence" value="ECO:0007669"/>
    <property type="project" value="UniProtKB-KW"/>
</dbReference>
<dbReference type="GO" id="GO:0006260">
    <property type="term" value="P:DNA replication"/>
    <property type="evidence" value="ECO:0007669"/>
    <property type="project" value="UniProtKB-KW"/>
</dbReference>
<dbReference type="CDD" id="cd17748">
    <property type="entry name" value="BRCT_DNA_ligase_like"/>
    <property type="match status" value="1"/>
</dbReference>
<dbReference type="CDD" id="cd00114">
    <property type="entry name" value="LIGANc"/>
    <property type="match status" value="1"/>
</dbReference>
<dbReference type="FunFam" id="1.10.150.20:FF:000006">
    <property type="entry name" value="DNA ligase"/>
    <property type="match status" value="1"/>
</dbReference>
<dbReference type="FunFam" id="1.10.150.20:FF:000007">
    <property type="entry name" value="DNA ligase"/>
    <property type="match status" value="1"/>
</dbReference>
<dbReference type="FunFam" id="1.10.287.610:FF:000002">
    <property type="entry name" value="DNA ligase"/>
    <property type="match status" value="1"/>
</dbReference>
<dbReference type="FunFam" id="2.40.50.140:FF:000012">
    <property type="entry name" value="DNA ligase"/>
    <property type="match status" value="1"/>
</dbReference>
<dbReference type="FunFam" id="3.30.470.30:FF:000001">
    <property type="entry name" value="DNA ligase"/>
    <property type="match status" value="1"/>
</dbReference>
<dbReference type="Gene3D" id="6.20.10.30">
    <property type="match status" value="1"/>
</dbReference>
<dbReference type="Gene3D" id="1.10.150.20">
    <property type="entry name" value="5' to 3' exonuclease, C-terminal subdomain"/>
    <property type="match status" value="2"/>
</dbReference>
<dbReference type="Gene3D" id="3.40.50.10190">
    <property type="entry name" value="BRCT domain"/>
    <property type="match status" value="1"/>
</dbReference>
<dbReference type="Gene3D" id="3.30.470.30">
    <property type="entry name" value="DNA ligase/mRNA capping enzyme"/>
    <property type="match status" value="1"/>
</dbReference>
<dbReference type="Gene3D" id="1.10.287.610">
    <property type="entry name" value="Helix hairpin bin"/>
    <property type="match status" value="1"/>
</dbReference>
<dbReference type="Gene3D" id="2.40.50.140">
    <property type="entry name" value="Nucleic acid-binding proteins"/>
    <property type="match status" value="1"/>
</dbReference>
<dbReference type="HAMAP" id="MF_01588">
    <property type="entry name" value="DNA_ligase_A"/>
    <property type="match status" value="1"/>
</dbReference>
<dbReference type="InterPro" id="IPR001357">
    <property type="entry name" value="BRCT_dom"/>
</dbReference>
<dbReference type="InterPro" id="IPR036420">
    <property type="entry name" value="BRCT_dom_sf"/>
</dbReference>
<dbReference type="InterPro" id="IPR041663">
    <property type="entry name" value="DisA/LigA_HHH"/>
</dbReference>
<dbReference type="InterPro" id="IPR001679">
    <property type="entry name" value="DNA_ligase"/>
</dbReference>
<dbReference type="InterPro" id="IPR018239">
    <property type="entry name" value="DNA_ligase_AS"/>
</dbReference>
<dbReference type="InterPro" id="IPR033136">
    <property type="entry name" value="DNA_ligase_CS"/>
</dbReference>
<dbReference type="InterPro" id="IPR013839">
    <property type="entry name" value="DNAligase_adenylation"/>
</dbReference>
<dbReference type="InterPro" id="IPR013840">
    <property type="entry name" value="DNAligase_N"/>
</dbReference>
<dbReference type="InterPro" id="IPR003583">
    <property type="entry name" value="Hlx-hairpin-Hlx_DNA-bd_motif"/>
</dbReference>
<dbReference type="InterPro" id="IPR012340">
    <property type="entry name" value="NA-bd_OB-fold"/>
</dbReference>
<dbReference type="InterPro" id="IPR004150">
    <property type="entry name" value="NAD_DNA_ligase_OB"/>
</dbReference>
<dbReference type="InterPro" id="IPR010994">
    <property type="entry name" value="RuvA_2-like"/>
</dbReference>
<dbReference type="InterPro" id="IPR004149">
    <property type="entry name" value="Znf_DNAligase_C4"/>
</dbReference>
<dbReference type="NCBIfam" id="TIGR00575">
    <property type="entry name" value="dnlj"/>
    <property type="match status" value="1"/>
</dbReference>
<dbReference type="NCBIfam" id="NF005932">
    <property type="entry name" value="PRK07956.1"/>
    <property type="match status" value="1"/>
</dbReference>
<dbReference type="PANTHER" id="PTHR23389">
    <property type="entry name" value="CHROMOSOME TRANSMISSION FIDELITY FACTOR 18"/>
    <property type="match status" value="1"/>
</dbReference>
<dbReference type="PANTHER" id="PTHR23389:SF9">
    <property type="entry name" value="DNA LIGASE"/>
    <property type="match status" value="1"/>
</dbReference>
<dbReference type="Pfam" id="PF00533">
    <property type="entry name" value="BRCT"/>
    <property type="match status" value="1"/>
</dbReference>
<dbReference type="Pfam" id="PF01653">
    <property type="entry name" value="DNA_ligase_aden"/>
    <property type="match status" value="1"/>
</dbReference>
<dbReference type="Pfam" id="PF03120">
    <property type="entry name" value="DNA_ligase_OB"/>
    <property type="match status" value="1"/>
</dbReference>
<dbReference type="Pfam" id="PF03119">
    <property type="entry name" value="DNA_ligase_ZBD"/>
    <property type="match status" value="1"/>
</dbReference>
<dbReference type="Pfam" id="PF12826">
    <property type="entry name" value="HHH_2"/>
    <property type="match status" value="1"/>
</dbReference>
<dbReference type="Pfam" id="PF14520">
    <property type="entry name" value="HHH_5"/>
    <property type="match status" value="1"/>
</dbReference>
<dbReference type="Pfam" id="PF22745">
    <property type="entry name" value="Nlig-Ia"/>
    <property type="match status" value="1"/>
</dbReference>
<dbReference type="PIRSF" id="PIRSF001604">
    <property type="entry name" value="LigA"/>
    <property type="match status" value="1"/>
</dbReference>
<dbReference type="SMART" id="SM00292">
    <property type="entry name" value="BRCT"/>
    <property type="match status" value="1"/>
</dbReference>
<dbReference type="SMART" id="SM00278">
    <property type="entry name" value="HhH1"/>
    <property type="match status" value="4"/>
</dbReference>
<dbReference type="SMART" id="SM00532">
    <property type="entry name" value="LIGANc"/>
    <property type="match status" value="1"/>
</dbReference>
<dbReference type="SUPFAM" id="SSF52113">
    <property type="entry name" value="BRCT domain"/>
    <property type="match status" value="1"/>
</dbReference>
<dbReference type="SUPFAM" id="SSF56091">
    <property type="entry name" value="DNA ligase/mRNA capping enzyme, catalytic domain"/>
    <property type="match status" value="1"/>
</dbReference>
<dbReference type="SUPFAM" id="SSF50249">
    <property type="entry name" value="Nucleic acid-binding proteins"/>
    <property type="match status" value="1"/>
</dbReference>
<dbReference type="SUPFAM" id="SSF47781">
    <property type="entry name" value="RuvA domain 2-like"/>
    <property type="match status" value="1"/>
</dbReference>
<dbReference type="PROSITE" id="PS50172">
    <property type="entry name" value="BRCT"/>
    <property type="match status" value="1"/>
</dbReference>
<dbReference type="PROSITE" id="PS01055">
    <property type="entry name" value="DNA_LIGASE_N1"/>
    <property type="match status" value="1"/>
</dbReference>
<dbReference type="PROSITE" id="PS01056">
    <property type="entry name" value="DNA_LIGASE_N2"/>
    <property type="match status" value="1"/>
</dbReference>
<protein>
    <recommendedName>
        <fullName evidence="1">DNA ligase</fullName>
        <ecNumber evidence="1">6.5.1.2</ecNumber>
    </recommendedName>
    <alternativeName>
        <fullName evidence="1">Polydeoxyribonucleotide synthase [NAD(+)]</fullName>
    </alternativeName>
</protein>
<sequence>MTDSIKLEIEQLRQTLRYHEYQYHVLDNPQIPDAEYDRLFHRLKTLEQQYPQWFSPDSPTQRVGAKPLSAFAQVQHEMPMLSLDNAFSDEELHAFVKRIQDRLVFSPKLLEFCCEPKLDGLAVSILYVDGKLTQAATRGDGSTGEDITLNIRTVRNIPLQLLMENPPTRLEVRGEVFMSQAGFEVLNEKALARGEKTFANPRNAAAGSLRQLDPRITSQRPLLLNAYSIGVAEGIDLPDTHFERLQWLKSIGIPVNNEIQLCEGTENVLNFYRAIMQKRSTLGYDIDGTVIKVNDIALQEELGFISKAPRWAIAYKFPAQEELTVLNAVEFQVGRTGAITPVAKLQPVFVAGVTVSNATLHNGDEIARLDVAIGDTVIIRRAGDVIPQIIGVLHEKRPANAEKIVFPTECPVCGSVIVRIEGEAVARCTGGLFCAAQRKEALKHFVSRKAMDIDGVGAKLIEQLVDREQIHTPADLFKLDLNTLARLERMGLKSAQNALDSLQKAKKTTLARFIFALGIREVGEATALNLANHFKTLEALKEATLEQLQEVQDVGEVVANRIFVFWREPHNVAVVEDLIAQGIHWETVEVKDVGDNPFKEKTVVLTGTLTQMGRTEAKALLQQLGAKVSGSVSAKTDLVVAGDSAGSKLTKANELGVKVIDENTFLAWSKPYL</sequence>
<feature type="chain" id="PRO_0000313353" description="DNA ligase">
    <location>
        <begin position="1"/>
        <end position="673"/>
    </location>
</feature>
<feature type="domain" description="BRCT" evidence="1">
    <location>
        <begin position="593"/>
        <end position="673"/>
    </location>
</feature>
<feature type="active site" description="N6-AMP-lysine intermediate" evidence="1">
    <location>
        <position position="117"/>
    </location>
</feature>
<feature type="binding site" evidence="1">
    <location>
        <begin position="33"/>
        <end position="37"/>
    </location>
    <ligand>
        <name>NAD(+)</name>
        <dbReference type="ChEBI" id="CHEBI:57540"/>
    </ligand>
</feature>
<feature type="binding site" evidence="1">
    <location>
        <begin position="82"/>
        <end position="83"/>
    </location>
    <ligand>
        <name>NAD(+)</name>
        <dbReference type="ChEBI" id="CHEBI:57540"/>
    </ligand>
</feature>
<feature type="binding site" evidence="1">
    <location>
        <position position="115"/>
    </location>
    <ligand>
        <name>NAD(+)</name>
        <dbReference type="ChEBI" id="CHEBI:57540"/>
    </ligand>
</feature>
<feature type="binding site" evidence="1">
    <location>
        <position position="138"/>
    </location>
    <ligand>
        <name>NAD(+)</name>
        <dbReference type="ChEBI" id="CHEBI:57540"/>
    </ligand>
</feature>
<feature type="binding site" evidence="1">
    <location>
        <position position="175"/>
    </location>
    <ligand>
        <name>NAD(+)</name>
        <dbReference type="ChEBI" id="CHEBI:57540"/>
    </ligand>
</feature>
<feature type="binding site" evidence="1">
    <location>
        <position position="292"/>
    </location>
    <ligand>
        <name>NAD(+)</name>
        <dbReference type="ChEBI" id="CHEBI:57540"/>
    </ligand>
</feature>
<feature type="binding site" evidence="1">
    <location>
        <position position="316"/>
    </location>
    <ligand>
        <name>NAD(+)</name>
        <dbReference type="ChEBI" id="CHEBI:57540"/>
    </ligand>
</feature>
<feature type="binding site" evidence="1">
    <location>
        <position position="410"/>
    </location>
    <ligand>
        <name>Zn(2+)</name>
        <dbReference type="ChEBI" id="CHEBI:29105"/>
    </ligand>
</feature>
<feature type="binding site" evidence="1">
    <location>
        <position position="413"/>
    </location>
    <ligand>
        <name>Zn(2+)</name>
        <dbReference type="ChEBI" id="CHEBI:29105"/>
    </ligand>
</feature>
<feature type="binding site" evidence="1">
    <location>
        <position position="428"/>
    </location>
    <ligand>
        <name>Zn(2+)</name>
        <dbReference type="ChEBI" id="CHEBI:29105"/>
    </ligand>
</feature>
<feature type="binding site" evidence="1">
    <location>
        <position position="434"/>
    </location>
    <ligand>
        <name>Zn(2+)</name>
        <dbReference type="ChEBI" id="CHEBI:29105"/>
    </ligand>
</feature>
<gene>
    <name evidence="1" type="primary">ligA</name>
    <name type="ordered locus">PM1716</name>
</gene>
<reference key="1">
    <citation type="journal article" date="2001" name="Proc. Natl. Acad. Sci. U.S.A.">
        <title>Complete genomic sequence of Pasteurella multocida Pm70.</title>
        <authorList>
            <person name="May B.J."/>
            <person name="Zhang Q."/>
            <person name="Li L.L."/>
            <person name="Paustian M.L."/>
            <person name="Whittam T.S."/>
            <person name="Kapur V."/>
        </authorList>
    </citation>
    <scope>NUCLEOTIDE SEQUENCE [LARGE SCALE GENOMIC DNA]</scope>
    <source>
        <strain>Pm70</strain>
    </source>
</reference>
<evidence type="ECO:0000255" key="1">
    <source>
        <dbReference type="HAMAP-Rule" id="MF_01588"/>
    </source>
</evidence>
<name>DNLJ_PASMU</name>
<accession>Q9CKA9</accession>
<keyword id="KW-0227">DNA damage</keyword>
<keyword id="KW-0234">DNA repair</keyword>
<keyword id="KW-0235">DNA replication</keyword>
<keyword id="KW-0436">Ligase</keyword>
<keyword id="KW-0460">Magnesium</keyword>
<keyword id="KW-0464">Manganese</keyword>
<keyword id="KW-0479">Metal-binding</keyword>
<keyword id="KW-0520">NAD</keyword>
<keyword id="KW-1185">Reference proteome</keyword>
<keyword id="KW-0862">Zinc</keyword>
<proteinExistence type="inferred from homology"/>
<comment type="function">
    <text evidence="1">DNA ligase that catalyzes the formation of phosphodiester linkages between 5'-phosphoryl and 3'-hydroxyl groups in double-stranded DNA using NAD as a coenzyme and as the energy source for the reaction. It is essential for DNA replication and repair of damaged DNA.</text>
</comment>
<comment type="catalytic activity">
    <reaction evidence="1">
        <text>NAD(+) + (deoxyribonucleotide)n-3'-hydroxyl + 5'-phospho-(deoxyribonucleotide)m = (deoxyribonucleotide)n+m + AMP + beta-nicotinamide D-nucleotide.</text>
        <dbReference type="EC" id="6.5.1.2"/>
    </reaction>
</comment>
<comment type="cofactor">
    <cofactor evidence="1">
        <name>Mg(2+)</name>
        <dbReference type="ChEBI" id="CHEBI:18420"/>
    </cofactor>
    <cofactor evidence="1">
        <name>Mn(2+)</name>
        <dbReference type="ChEBI" id="CHEBI:29035"/>
    </cofactor>
</comment>
<comment type="similarity">
    <text evidence="1">Belongs to the NAD-dependent DNA ligase family. LigA subfamily.</text>
</comment>